<keyword id="KW-0030">Aminoacyl-tRNA synthetase</keyword>
<keyword id="KW-0067">ATP-binding</keyword>
<keyword id="KW-0963">Cytoplasm</keyword>
<keyword id="KW-0436">Ligase</keyword>
<keyword id="KW-0547">Nucleotide-binding</keyword>
<keyword id="KW-0648">Protein biosynthesis</keyword>
<reference key="1">
    <citation type="journal article" date="2003" name="Mol. Microbiol.">
        <title>An integrated analysis of the genome of the hyperthermophilic archaeon Pyrococcus abyssi.</title>
        <authorList>
            <person name="Cohen G.N."/>
            <person name="Barbe V."/>
            <person name="Flament D."/>
            <person name="Galperin M."/>
            <person name="Heilig R."/>
            <person name="Lecompte O."/>
            <person name="Poch O."/>
            <person name="Prieur D."/>
            <person name="Querellou J."/>
            <person name="Ripp R."/>
            <person name="Thierry J.-C."/>
            <person name="Van der Oost J."/>
            <person name="Weissenbach J."/>
            <person name="Zivanovic Y."/>
            <person name="Forterre P."/>
        </authorList>
    </citation>
    <scope>NUCLEOTIDE SEQUENCE [LARGE SCALE GENOMIC DNA]</scope>
    <source>
        <strain>GE5 / Orsay</strain>
    </source>
</reference>
<reference key="2">
    <citation type="journal article" date="2012" name="Curr. Microbiol.">
        <title>Re-annotation of two hyperthermophilic archaea Pyrococcus abyssi GE5 and Pyrococcus furiosus DSM 3638.</title>
        <authorList>
            <person name="Gao J."/>
            <person name="Wang J."/>
        </authorList>
    </citation>
    <scope>GENOME REANNOTATION</scope>
    <source>
        <strain>GE5 / Orsay</strain>
    </source>
</reference>
<protein>
    <recommendedName>
        <fullName evidence="1">Tryptophan--tRNA ligase</fullName>
        <ecNumber evidence="1">6.1.1.2</ecNumber>
    </recommendedName>
    <alternativeName>
        <fullName evidence="1">Tryptophanyl-tRNA synthetase</fullName>
        <shortName evidence="1">TrpRS</shortName>
    </alternativeName>
</protein>
<comment type="catalytic activity">
    <reaction evidence="1">
        <text>tRNA(Trp) + L-tryptophan + ATP = L-tryptophyl-tRNA(Trp) + AMP + diphosphate + H(+)</text>
        <dbReference type="Rhea" id="RHEA:24080"/>
        <dbReference type="Rhea" id="RHEA-COMP:9671"/>
        <dbReference type="Rhea" id="RHEA-COMP:9705"/>
        <dbReference type="ChEBI" id="CHEBI:15378"/>
        <dbReference type="ChEBI" id="CHEBI:30616"/>
        <dbReference type="ChEBI" id="CHEBI:33019"/>
        <dbReference type="ChEBI" id="CHEBI:57912"/>
        <dbReference type="ChEBI" id="CHEBI:78442"/>
        <dbReference type="ChEBI" id="CHEBI:78535"/>
        <dbReference type="ChEBI" id="CHEBI:456215"/>
        <dbReference type="EC" id="6.1.1.2"/>
    </reaction>
</comment>
<comment type="subcellular location">
    <subcellularLocation>
        <location evidence="1">Cytoplasm</location>
    </subcellularLocation>
</comment>
<comment type="similarity">
    <text evidence="1">Belongs to the class-I aminoacyl-tRNA synthetase family.</text>
</comment>
<feature type="chain" id="PRO_0000136727" description="Tryptophan--tRNA ligase">
    <location>
        <begin position="1"/>
        <end position="385"/>
    </location>
</feature>
<feature type="short sequence motif" description="'HIGH' region">
    <location>
        <begin position="82"/>
        <end position="90"/>
    </location>
</feature>
<feature type="short sequence motif" description="'KMSKS' region">
    <location>
        <begin position="253"/>
        <end position="257"/>
    </location>
</feature>
<proteinExistence type="inferred from homology"/>
<name>SYW_PYRAB</name>
<dbReference type="EC" id="6.1.1.2" evidence="1"/>
<dbReference type="EMBL" id="AJ248288">
    <property type="protein sequence ID" value="CAB50601.1"/>
    <property type="molecule type" value="Genomic_DNA"/>
</dbReference>
<dbReference type="EMBL" id="HE613800">
    <property type="protein sequence ID" value="CCE71167.1"/>
    <property type="molecule type" value="Genomic_DNA"/>
</dbReference>
<dbReference type="PIR" id="C75020">
    <property type="entry name" value="C75020"/>
</dbReference>
<dbReference type="RefSeq" id="WP_010868815.1">
    <property type="nucleotide sequence ID" value="NC_000868.1"/>
</dbReference>
<dbReference type="SMR" id="Q9UY11"/>
<dbReference type="STRING" id="272844.PAB1111"/>
<dbReference type="KEGG" id="pab:PAB1111"/>
<dbReference type="PATRIC" id="fig|272844.11.peg.1813"/>
<dbReference type="eggNOG" id="arCOG01887">
    <property type="taxonomic scope" value="Archaea"/>
</dbReference>
<dbReference type="HOGENOM" id="CLU_032621_0_1_2"/>
<dbReference type="OrthoDB" id="371821at2157"/>
<dbReference type="PhylomeDB" id="Q9UY11"/>
<dbReference type="Proteomes" id="UP000000810">
    <property type="component" value="Chromosome"/>
</dbReference>
<dbReference type="Proteomes" id="UP000009139">
    <property type="component" value="Chromosome"/>
</dbReference>
<dbReference type="GO" id="GO:0005737">
    <property type="term" value="C:cytoplasm"/>
    <property type="evidence" value="ECO:0007669"/>
    <property type="project" value="UniProtKB-SubCell"/>
</dbReference>
<dbReference type="GO" id="GO:0005524">
    <property type="term" value="F:ATP binding"/>
    <property type="evidence" value="ECO:0007669"/>
    <property type="project" value="UniProtKB-UniRule"/>
</dbReference>
<dbReference type="GO" id="GO:0004830">
    <property type="term" value="F:tryptophan-tRNA ligase activity"/>
    <property type="evidence" value="ECO:0007669"/>
    <property type="project" value="UniProtKB-UniRule"/>
</dbReference>
<dbReference type="GO" id="GO:0006436">
    <property type="term" value="P:tryptophanyl-tRNA aminoacylation"/>
    <property type="evidence" value="ECO:0007669"/>
    <property type="project" value="UniProtKB-UniRule"/>
</dbReference>
<dbReference type="CDD" id="cd00806">
    <property type="entry name" value="TrpRS_core"/>
    <property type="match status" value="1"/>
</dbReference>
<dbReference type="FunFam" id="1.10.240.10:FF:000007">
    <property type="entry name" value="Tryptophan--tRNA ligase"/>
    <property type="match status" value="1"/>
</dbReference>
<dbReference type="FunFam" id="3.40.50.620:FF:000138">
    <property type="entry name" value="Tryptophan--tRNA ligase"/>
    <property type="match status" value="1"/>
</dbReference>
<dbReference type="Gene3D" id="3.40.50.620">
    <property type="entry name" value="HUPs"/>
    <property type="match status" value="1"/>
</dbReference>
<dbReference type="Gene3D" id="1.10.240.10">
    <property type="entry name" value="Tyrosyl-Transfer RNA Synthetase"/>
    <property type="match status" value="1"/>
</dbReference>
<dbReference type="HAMAP" id="MF_00140_A">
    <property type="entry name" value="Trp_tRNA_synth_A"/>
    <property type="match status" value="1"/>
</dbReference>
<dbReference type="InterPro" id="IPR001412">
    <property type="entry name" value="aa-tRNA-synth_I_CS"/>
</dbReference>
<dbReference type="InterPro" id="IPR002305">
    <property type="entry name" value="aa-tRNA-synth_Ic"/>
</dbReference>
<dbReference type="InterPro" id="IPR014729">
    <property type="entry name" value="Rossmann-like_a/b/a_fold"/>
</dbReference>
<dbReference type="InterPro" id="IPR002306">
    <property type="entry name" value="Trp-tRNA-ligase"/>
</dbReference>
<dbReference type="InterPro" id="IPR020653">
    <property type="entry name" value="Tryptophan-tRNA-ligase_arc"/>
</dbReference>
<dbReference type="NCBIfam" id="NF008924">
    <property type="entry name" value="PRK12285.1-1"/>
    <property type="match status" value="1"/>
</dbReference>
<dbReference type="NCBIfam" id="NF008927">
    <property type="entry name" value="PRK12285.1-4"/>
    <property type="match status" value="1"/>
</dbReference>
<dbReference type="NCBIfam" id="TIGR00233">
    <property type="entry name" value="trpS"/>
    <property type="match status" value="1"/>
</dbReference>
<dbReference type="PANTHER" id="PTHR10055:SF1">
    <property type="entry name" value="TRYPTOPHAN--TRNA LIGASE, CYTOPLASMIC"/>
    <property type="match status" value="1"/>
</dbReference>
<dbReference type="PANTHER" id="PTHR10055">
    <property type="entry name" value="TRYPTOPHANYL-TRNA SYNTHETASE"/>
    <property type="match status" value="1"/>
</dbReference>
<dbReference type="Pfam" id="PF00579">
    <property type="entry name" value="tRNA-synt_1b"/>
    <property type="match status" value="1"/>
</dbReference>
<dbReference type="PRINTS" id="PR01039">
    <property type="entry name" value="TRNASYNTHTRP"/>
</dbReference>
<dbReference type="SUPFAM" id="SSF52374">
    <property type="entry name" value="Nucleotidylyl transferase"/>
    <property type="match status" value="1"/>
</dbReference>
<dbReference type="PROSITE" id="PS00178">
    <property type="entry name" value="AA_TRNA_LIGASE_I"/>
    <property type="match status" value="1"/>
</dbReference>
<organism>
    <name type="scientific">Pyrococcus abyssi (strain GE5 / Orsay)</name>
    <dbReference type="NCBI Taxonomy" id="272844"/>
    <lineage>
        <taxon>Archaea</taxon>
        <taxon>Methanobacteriati</taxon>
        <taxon>Methanobacteriota</taxon>
        <taxon>Thermococci</taxon>
        <taxon>Thermococcales</taxon>
        <taxon>Thermococcaceae</taxon>
        <taxon>Pyrococcus</taxon>
    </lineage>
</organism>
<evidence type="ECO:0000255" key="1">
    <source>
        <dbReference type="HAMAP-Rule" id="MF_00140"/>
    </source>
</evidence>
<gene>
    <name evidence="1" type="primary">trpS</name>
    <name type="ordered locus">PYRAB16970</name>
    <name type="ORF">PAB1111</name>
</gene>
<accession>Q9UY11</accession>
<accession>G8ZK60</accession>
<sequence>MVEDFKVTPWEVEGVVDYNKLIEHFGTSPLTEELLEKTAELTKSELPLFFRRKFFFSHRDYDKVLQDYEEGRGFFLYTGRGPSGPMHIGHIIPFFATKWLQEKFGVNLYIQITDDEKFLFKENLTFEDTKHWAYENILDIIAVGFDPDKTFIFQNSEFTKIYEMAIPIAKKINFSMAKAVFGFTEQSKIGMIFFPAIQIAPTFFEKRRCLIPAAIDQDPYWRLQRDFAESLGYYKTAAIHSKFVPSLTSLSGKMSASKPETAIYLTDSPEDVEKKVWKFALTGGRPTLKEQREKGGEPEKCVVFKWLEIFFEEDDKKLKERYYACKNGELTCGECKRYLISKIQEFLKEHQKRRKKAEKQIEKFKYTGKLAQEMWDKAIPEPLKG</sequence>